<sequence>MFLNEKVGAVIVAAGQSRRMGGQDKIFARLSGKPVLAHTLSVFQQSPEIDDIALVVSEHNLKKAKELVKEYNFSKVIAICSGGELRQDSVSSGLTALCDCGWVLIHDGARPLLDPVSIPEGLEAAKLCGSAVAAVPLKDTVKEISPEGLVEKTLPREKLISVQTPQVFRADIIQKAYRRVGITATDDAQLVEKLKLPVKIFSGAYANIKITTPEDLLMAEILLKKGR</sequence>
<accession>Q3ZAD7</accession>
<proteinExistence type="inferred from homology"/>
<protein>
    <recommendedName>
        <fullName evidence="1">2-C-methyl-D-erythritol 4-phosphate cytidylyltransferase</fullName>
        <ecNumber evidence="1">2.7.7.60</ecNumber>
    </recommendedName>
    <alternativeName>
        <fullName evidence="1">4-diphosphocytidyl-2C-methyl-D-erythritol synthase</fullName>
    </alternativeName>
    <alternativeName>
        <fullName evidence="1">MEP cytidylyltransferase</fullName>
        <shortName evidence="1">MCT</shortName>
    </alternativeName>
</protein>
<feature type="chain" id="PRO_0000237787" description="2-C-methyl-D-erythritol 4-phosphate cytidylyltransferase">
    <location>
        <begin position="1"/>
        <end position="227"/>
    </location>
</feature>
<feature type="site" description="Transition state stabilizer" evidence="1">
    <location>
        <position position="19"/>
    </location>
</feature>
<feature type="site" description="Transition state stabilizer" evidence="1">
    <location>
        <position position="25"/>
    </location>
</feature>
<feature type="site" description="Positions MEP for the nucleophilic attack" evidence="1">
    <location>
        <position position="156"/>
    </location>
</feature>
<feature type="site" description="Positions MEP for the nucleophilic attack" evidence="1">
    <location>
        <position position="209"/>
    </location>
</feature>
<dbReference type="EC" id="2.7.7.60" evidence="1"/>
<dbReference type="EMBL" id="CP000027">
    <property type="protein sequence ID" value="AAW39081.1"/>
    <property type="molecule type" value="Genomic_DNA"/>
</dbReference>
<dbReference type="RefSeq" id="WP_010935867.1">
    <property type="nucleotide sequence ID" value="NC_002936.3"/>
</dbReference>
<dbReference type="SMR" id="Q3ZAD7"/>
<dbReference type="FunCoup" id="Q3ZAD7">
    <property type="interactions" value="216"/>
</dbReference>
<dbReference type="STRING" id="243164.DET0059"/>
<dbReference type="GeneID" id="3229038"/>
<dbReference type="KEGG" id="det:DET0059"/>
<dbReference type="PATRIC" id="fig|243164.10.peg.55"/>
<dbReference type="eggNOG" id="COG1211">
    <property type="taxonomic scope" value="Bacteria"/>
</dbReference>
<dbReference type="HOGENOM" id="CLU_061281_2_2_0"/>
<dbReference type="InParanoid" id="Q3ZAD7"/>
<dbReference type="UniPathway" id="UPA00056">
    <property type="reaction ID" value="UER00093"/>
</dbReference>
<dbReference type="Proteomes" id="UP000008289">
    <property type="component" value="Chromosome"/>
</dbReference>
<dbReference type="GO" id="GO:0050518">
    <property type="term" value="F:2-C-methyl-D-erythritol 4-phosphate cytidylyltransferase activity"/>
    <property type="evidence" value="ECO:0007669"/>
    <property type="project" value="UniProtKB-UniRule"/>
</dbReference>
<dbReference type="GO" id="GO:0019288">
    <property type="term" value="P:isopentenyl diphosphate biosynthetic process, methylerythritol 4-phosphate pathway"/>
    <property type="evidence" value="ECO:0007669"/>
    <property type="project" value="UniProtKB-UniRule"/>
</dbReference>
<dbReference type="CDD" id="cd02516">
    <property type="entry name" value="CDP-ME_synthetase"/>
    <property type="match status" value="1"/>
</dbReference>
<dbReference type="FunFam" id="3.90.550.10:FF:000003">
    <property type="entry name" value="2-C-methyl-D-erythritol 4-phosphate cytidylyltransferase"/>
    <property type="match status" value="1"/>
</dbReference>
<dbReference type="Gene3D" id="3.90.550.10">
    <property type="entry name" value="Spore Coat Polysaccharide Biosynthesis Protein SpsA, Chain A"/>
    <property type="match status" value="1"/>
</dbReference>
<dbReference type="HAMAP" id="MF_00108">
    <property type="entry name" value="IspD"/>
    <property type="match status" value="1"/>
</dbReference>
<dbReference type="InterPro" id="IPR001228">
    <property type="entry name" value="IspD"/>
</dbReference>
<dbReference type="InterPro" id="IPR034683">
    <property type="entry name" value="IspD/TarI"/>
</dbReference>
<dbReference type="InterPro" id="IPR050088">
    <property type="entry name" value="IspD/TarI_cytidylyltransf_bact"/>
</dbReference>
<dbReference type="InterPro" id="IPR018294">
    <property type="entry name" value="ISPD_synthase_CS"/>
</dbReference>
<dbReference type="InterPro" id="IPR029044">
    <property type="entry name" value="Nucleotide-diphossugar_trans"/>
</dbReference>
<dbReference type="NCBIfam" id="TIGR00453">
    <property type="entry name" value="ispD"/>
    <property type="match status" value="1"/>
</dbReference>
<dbReference type="NCBIfam" id="NF001186">
    <property type="entry name" value="PRK00155.2-3"/>
    <property type="match status" value="1"/>
</dbReference>
<dbReference type="PANTHER" id="PTHR32125">
    <property type="entry name" value="2-C-METHYL-D-ERYTHRITOL 4-PHOSPHATE CYTIDYLYLTRANSFERASE, CHLOROPLASTIC"/>
    <property type="match status" value="1"/>
</dbReference>
<dbReference type="PANTHER" id="PTHR32125:SF4">
    <property type="entry name" value="2-C-METHYL-D-ERYTHRITOL 4-PHOSPHATE CYTIDYLYLTRANSFERASE, CHLOROPLASTIC"/>
    <property type="match status" value="1"/>
</dbReference>
<dbReference type="Pfam" id="PF01128">
    <property type="entry name" value="IspD"/>
    <property type="match status" value="1"/>
</dbReference>
<dbReference type="SUPFAM" id="SSF53448">
    <property type="entry name" value="Nucleotide-diphospho-sugar transferases"/>
    <property type="match status" value="1"/>
</dbReference>
<dbReference type="PROSITE" id="PS01295">
    <property type="entry name" value="ISPD"/>
    <property type="match status" value="1"/>
</dbReference>
<gene>
    <name evidence="1" type="primary">ispD</name>
    <name type="ordered locus">DET0059</name>
</gene>
<evidence type="ECO:0000255" key="1">
    <source>
        <dbReference type="HAMAP-Rule" id="MF_00108"/>
    </source>
</evidence>
<organism>
    <name type="scientific">Dehalococcoides mccartyi (strain ATCC BAA-2266 / KCTC 15142 / 195)</name>
    <name type="common">Dehalococcoides ethenogenes (strain 195)</name>
    <dbReference type="NCBI Taxonomy" id="243164"/>
    <lineage>
        <taxon>Bacteria</taxon>
        <taxon>Bacillati</taxon>
        <taxon>Chloroflexota</taxon>
        <taxon>Dehalococcoidia</taxon>
        <taxon>Dehalococcoidales</taxon>
        <taxon>Dehalococcoidaceae</taxon>
        <taxon>Dehalococcoides</taxon>
    </lineage>
</organism>
<name>ISPD_DEHM1</name>
<keyword id="KW-0414">Isoprene biosynthesis</keyword>
<keyword id="KW-0548">Nucleotidyltransferase</keyword>
<keyword id="KW-0808">Transferase</keyword>
<reference key="1">
    <citation type="journal article" date="2005" name="Science">
        <title>Genome sequence of the PCE-dechlorinating bacterium Dehalococcoides ethenogenes.</title>
        <authorList>
            <person name="Seshadri R."/>
            <person name="Adrian L."/>
            <person name="Fouts D.E."/>
            <person name="Eisen J.A."/>
            <person name="Phillippy A.M."/>
            <person name="Methe B.A."/>
            <person name="Ward N.L."/>
            <person name="Nelson W.C."/>
            <person name="DeBoy R.T."/>
            <person name="Khouri H.M."/>
            <person name="Kolonay J.F."/>
            <person name="Dodson R.J."/>
            <person name="Daugherty S.C."/>
            <person name="Brinkac L.M."/>
            <person name="Sullivan S.A."/>
            <person name="Madupu R."/>
            <person name="Nelson K.E."/>
            <person name="Kang K.H."/>
            <person name="Impraim M."/>
            <person name="Tran K."/>
            <person name="Robinson J.M."/>
            <person name="Forberger H.A."/>
            <person name="Fraser C.M."/>
            <person name="Zinder S.H."/>
            <person name="Heidelberg J.F."/>
        </authorList>
    </citation>
    <scope>NUCLEOTIDE SEQUENCE [LARGE SCALE GENOMIC DNA]</scope>
    <source>
        <strain>ATCC BAA-2266 / KCTC 15142 / 195</strain>
    </source>
</reference>
<comment type="function">
    <text evidence="1">Catalyzes the formation of 4-diphosphocytidyl-2-C-methyl-D-erythritol from CTP and 2-C-methyl-D-erythritol 4-phosphate (MEP).</text>
</comment>
<comment type="catalytic activity">
    <reaction evidence="1">
        <text>2-C-methyl-D-erythritol 4-phosphate + CTP + H(+) = 4-CDP-2-C-methyl-D-erythritol + diphosphate</text>
        <dbReference type="Rhea" id="RHEA:13429"/>
        <dbReference type="ChEBI" id="CHEBI:15378"/>
        <dbReference type="ChEBI" id="CHEBI:33019"/>
        <dbReference type="ChEBI" id="CHEBI:37563"/>
        <dbReference type="ChEBI" id="CHEBI:57823"/>
        <dbReference type="ChEBI" id="CHEBI:58262"/>
        <dbReference type="EC" id="2.7.7.60"/>
    </reaction>
</comment>
<comment type="pathway">
    <text evidence="1">Isoprenoid biosynthesis; isopentenyl diphosphate biosynthesis via DXP pathway; isopentenyl diphosphate from 1-deoxy-D-xylulose 5-phosphate: step 2/6.</text>
</comment>
<comment type="similarity">
    <text evidence="1">Belongs to the IspD/TarI cytidylyltransferase family. IspD subfamily.</text>
</comment>